<keyword id="KW-0929">Antimicrobial</keyword>
<keyword id="KW-0081">Bacteriolytic enzyme</keyword>
<keyword id="KW-0903">Direct protein sequencing</keyword>
<keyword id="KW-1015">Disulfide bond</keyword>
<keyword id="KW-0326">Glycosidase</keyword>
<keyword id="KW-0378">Hydrolase</keyword>
<keyword id="KW-0964">Secreted</keyword>
<dbReference type="EC" id="3.2.1.17"/>
<dbReference type="PIR" id="A00861">
    <property type="entry name" value="LZDK3"/>
</dbReference>
<dbReference type="SMR" id="P00706"/>
<dbReference type="CAZy" id="GH22">
    <property type="family name" value="Glycoside Hydrolase Family 22"/>
</dbReference>
<dbReference type="Proteomes" id="UP000694400">
    <property type="component" value="Unplaced"/>
</dbReference>
<dbReference type="GO" id="GO:0005576">
    <property type="term" value="C:extracellular region"/>
    <property type="evidence" value="ECO:0007669"/>
    <property type="project" value="UniProtKB-SubCell"/>
</dbReference>
<dbReference type="GO" id="GO:0003796">
    <property type="term" value="F:lysozyme activity"/>
    <property type="evidence" value="ECO:0007669"/>
    <property type="project" value="UniProtKB-EC"/>
</dbReference>
<dbReference type="GO" id="GO:0050829">
    <property type="term" value="P:defense response to Gram-negative bacterium"/>
    <property type="evidence" value="ECO:0007669"/>
    <property type="project" value="TreeGrafter"/>
</dbReference>
<dbReference type="GO" id="GO:0050830">
    <property type="term" value="P:defense response to Gram-positive bacterium"/>
    <property type="evidence" value="ECO:0007669"/>
    <property type="project" value="TreeGrafter"/>
</dbReference>
<dbReference type="GO" id="GO:0031640">
    <property type="term" value="P:killing of cells of another organism"/>
    <property type="evidence" value="ECO:0007669"/>
    <property type="project" value="UniProtKB-KW"/>
</dbReference>
<dbReference type="CDD" id="cd16897">
    <property type="entry name" value="LYZ_C"/>
    <property type="match status" value="1"/>
</dbReference>
<dbReference type="FunFam" id="1.10.530.10:FF:000001">
    <property type="entry name" value="Lysozyme C"/>
    <property type="match status" value="1"/>
</dbReference>
<dbReference type="Gene3D" id="1.10.530.10">
    <property type="match status" value="1"/>
</dbReference>
<dbReference type="InterPro" id="IPR001916">
    <property type="entry name" value="Glyco_hydro_22"/>
</dbReference>
<dbReference type="InterPro" id="IPR019799">
    <property type="entry name" value="Glyco_hydro_22_CS"/>
</dbReference>
<dbReference type="InterPro" id="IPR000974">
    <property type="entry name" value="Glyco_hydro_22_lys"/>
</dbReference>
<dbReference type="InterPro" id="IPR023346">
    <property type="entry name" value="Lysozyme-like_dom_sf"/>
</dbReference>
<dbReference type="PANTHER" id="PTHR11407">
    <property type="entry name" value="LYSOZYME C"/>
    <property type="match status" value="1"/>
</dbReference>
<dbReference type="PANTHER" id="PTHR11407:SF28">
    <property type="entry name" value="LYSOZYME C"/>
    <property type="match status" value="1"/>
</dbReference>
<dbReference type="Pfam" id="PF00062">
    <property type="entry name" value="Lys"/>
    <property type="match status" value="1"/>
</dbReference>
<dbReference type="PRINTS" id="PR00137">
    <property type="entry name" value="LYSOZYME"/>
</dbReference>
<dbReference type="PRINTS" id="PR00135">
    <property type="entry name" value="LYZLACT"/>
</dbReference>
<dbReference type="SMART" id="SM00263">
    <property type="entry name" value="LYZ1"/>
    <property type="match status" value="1"/>
</dbReference>
<dbReference type="SUPFAM" id="SSF53955">
    <property type="entry name" value="Lysozyme-like"/>
    <property type="match status" value="1"/>
</dbReference>
<dbReference type="PROSITE" id="PS00128">
    <property type="entry name" value="GLYCOSYL_HYDROL_F22_1"/>
    <property type="match status" value="1"/>
</dbReference>
<dbReference type="PROSITE" id="PS51348">
    <property type="entry name" value="GLYCOSYL_HYDROL_F22_2"/>
    <property type="match status" value="1"/>
</dbReference>
<feature type="chain" id="PRO_0000208859" description="Lysozyme C-3">
    <location>
        <begin position="1"/>
        <end position="129"/>
    </location>
</feature>
<feature type="domain" description="C-type lysozyme" evidence="1">
    <location>
        <begin position="1"/>
        <end position="129"/>
    </location>
</feature>
<feature type="active site" evidence="1">
    <location>
        <position position="35"/>
    </location>
</feature>
<feature type="active site" evidence="1">
    <location>
        <position position="52"/>
    </location>
</feature>
<feature type="disulfide bond">
    <location>
        <begin position="6"/>
        <end position="127"/>
    </location>
</feature>
<feature type="disulfide bond">
    <location>
        <begin position="30"/>
        <end position="115"/>
    </location>
</feature>
<feature type="disulfide bond">
    <location>
        <begin position="64"/>
        <end position="80"/>
    </location>
</feature>
<feature type="disulfide bond">
    <location>
        <begin position="76"/>
        <end position="94"/>
    </location>
</feature>
<feature type="sequence variant" description="In 30% of the molecules.">
    <original>S</original>
    <variation>G</variation>
    <location>
        <position position="37"/>
    </location>
</feature>
<protein>
    <recommendedName>
        <fullName>Lysozyme C-3</fullName>
        <ecNumber>3.2.1.17</ecNumber>
    </recommendedName>
    <alternativeName>
        <fullName>1,4-beta-N-acetylmuramidase</fullName>
    </alternativeName>
</protein>
<organism>
    <name type="scientific">Anas platyrhynchos</name>
    <name type="common">Mallard</name>
    <name type="synonym">Anas boschas</name>
    <dbReference type="NCBI Taxonomy" id="8839"/>
    <lineage>
        <taxon>Eukaryota</taxon>
        <taxon>Metazoa</taxon>
        <taxon>Chordata</taxon>
        <taxon>Craniata</taxon>
        <taxon>Vertebrata</taxon>
        <taxon>Euteleostomi</taxon>
        <taxon>Archelosauria</taxon>
        <taxon>Archosauria</taxon>
        <taxon>Dinosauria</taxon>
        <taxon>Saurischia</taxon>
        <taxon>Theropoda</taxon>
        <taxon>Coelurosauria</taxon>
        <taxon>Aves</taxon>
        <taxon>Neognathae</taxon>
        <taxon>Galloanserae</taxon>
        <taxon>Anseriformes</taxon>
        <taxon>Anatidae</taxon>
        <taxon>Anatinae</taxon>
        <taxon>Anas</taxon>
    </lineage>
</organism>
<sequence length="129" mass="14507">KVYERCELAAAMKRLGLDNYRGYSLGNWVCAANYESSFNTQATNRNTDGSTDYGILEINSRWWCDNGKTPRAKNACGIPCSVLLRSDITEAVKCAKRIVSDGDGMNAWVAWRNRCKGTDVSRWIRGCRL</sequence>
<name>LYSC3_ANAPL</name>
<evidence type="ECO:0000255" key="1">
    <source>
        <dbReference type="PROSITE-ProRule" id="PRU00680"/>
    </source>
</evidence>
<comment type="function">
    <text>Lysozymes have primarily a bacteriolytic function; those in tissues and body fluids are associated with the monocyte-macrophage system and enhance the activity of immunoagents.</text>
</comment>
<comment type="catalytic activity">
    <reaction>
        <text>Hydrolysis of (1-&gt;4)-beta-linkages between N-acetylmuramic acid and N-acetyl-D-glucosamine residues in a peptidoglycan and between N-acetyl-D-glucosamine residues in chitodextrins.</text>
        <dbReference type="EC" id="3.2.1.17"/>
    </reaction>
</comment>
<comment type="subcellular location">
    <subcellularLocation>
        <location>Secreted</location>
    </subcellularLocation>
</comment>
<comment type="miscellaneous">
    <text>Lysozyme C is capable of both hydrolysis and transglycosylation; it also shows a slight esterase activity. It acts rapidly on both peptide-substituted and unsubstituted peptidoglycan, and slowly on chitin oligosaccharides.</text>
</comment>
<comment type="similarity">
    <text evidence="1">Belongs to the glycosyl hydrolase 22 family.</text>
</comment>
<accession>P00706</accession>
<reference key="1">
    <citation type="journal article" date="1971" name="Eur. J. Biochem.">
        <title>Multiple forms of duck-egg white lysozyme. Primary structure of two duck lysozymes.</title>
        <authorList>
            <person name="Hermann J."/>
            <person name="Jolles J."/>
            <person name="Jolles P."/>
        </authorList>
    </citation>
    <scope>PROTEIN SEQUENCE</scope>
    <source>
        <strain>Kaki duck</strain>
        <tissue>Egg white</tissue>
    </source>
</reference>
<proteinExistence type="evidence at protein level"/>